<sequence length="137" mass="15138">MGMYLLHIGNAAVTFNGPTPCPRSPYASTHVNVSWESASGIATLWANGKLVGRKGVWKGYSVGEEAKIILGQEQDSFGGHFDENQSFVGVIWDVFLWDHVLPPKEMCDSCYSGSLLNRHTLTYEDNGYVVTKPKVWA</sequence>
<evidence type="ECO:0000255" key="1">
    <source>
        <dbReference type="PROSITE-ProRule" id="PRU01172"/>
    </source>
</evidence>
<evidence type="ECO:0000269" key="2">
    <source>
    </source>
</evidence>
<evidence type="ECO:0000305" key="3"/>
<keyword id="KW-0106">Calcium</keyword>
<keyword id="KW-0479">Metal-binding</keyword>
<keyword id="KW-1185">Reference proteome</keyword>
<proteinExistence type="uncertain"/>
<accession>A8MV57</accession>
<comment type="tissue specificity">
    <text evidence="2">Not expressed in the intestinal tract including ascending colon, descending colon and rectum. Not expressed in the human colon cancer cell lines HT-29 and CaCo-2.</text>
</comment>
<comment type="similarity">
    <text evidence="3">Belongs to the pentraxin family.</text>
</comment>
<comment type="caution">
    <text evidence="3">Could be the product of a pseudogene. Much shorter in N-terminus than its rodent counterparts due to a stop codon insertion. However, proteomics data suggest the existence of the protein.</text>
</comment>
<feature type="chain" id="PRO_0000342395" description="Putative mucosal pentraxin homolog">
    <location>
        <begin position="1"/>
        <end position="137"/>
    </location>
</feature>
<feature type="domain" description="Pentraxin (PTX)" evidence="1">
    <location>
        <begin position="1"/>
        <end position="137"/>
    </location>
</feature>
<feature type="binding site" evidence="1">
    <location>
        <position position="73"/>
    </location>
    <ligand>
        <name>Ca(2+)</name>
        <dbReference type="ChEBI" id="CHEBI:29108"/>
    </ligand>
</feature>
<feature type="binding site" evidence="1">
    <location>
        <position position="75"/>
    </location>
    <ligand>
        <name>Ca(2+)</name>
        <dbReference type="ChEBI" id="CHEBI:29108"/>
    </ligand>
</feature>
<feature type="binding site" evidence="1">
    <location>
        <position position="85"/>
    </location>
    <ligand>
        <name>Ca(2+)</name>
        <dbReference type="ChEBI" id="CHEBI:29108"/>
    </ligand>
</feature>
<reference key="1">
    <citation type="journal article" date="2006" name="Nature">
        <title>The DNA sequence and biological annotation of human chromosome 1.</title>
        <authorList>
            <person name="Gregory S.G."/>
            <person name="Barlow K.F."/>
            <person name="McLay K.E."/>
            <person name="Kaul R."/>
            <person name="Swarbreck D."/>
            <person name="Dunham A."/>
            <person name="Scott C.E."/>
            <person name="Howe K.L."/>
            <person name="Woodfine K."/>
            <person name="Spencer C.C.A."/>
            <person name="Jones M.C."/>
            <person name="Gillson C."/>
            <person name="Searle S."/>
            <person name="Zhou Y."/>
            <person name="Kokocinski F."/>
            <person name="McDonald L."/>
            <person name="Evans R."/>
            <person name="Phillips K."/>
            <person name="Atkinson A."/>
            <person name="Cooper R."/>
            <person name="Jones C."/>
            <person name="Hall R.E."/>
            <person name="Andrews T.D."/>
            <person name="Lloyd C."/>
            <person name="Ainscough R."/>
            <person name="Almeida J.P."/>
            <person name="Ambrose K.D."/>
            <person name="Anderson F."/>
            <person name="Andrew R.W."/>
            <person name="Ashwell R.I.S."/>
            <person name="Aubin K."/>
            <person name="Babbage A.K."/>
            <person name="Bagguley C.L."/>
            <person name="Bailey J."/>
            <person name="Beasley H."/>
            <person name="Bethel G."/>
            <person name="Bird C.P."/>
            <person name="Bray-Allen S."/>
            <person name="Brown J.Y."/>
            <person name="Brown A.J."/>
            <person name="Buckley D."/>
            <person name="Burton J."/>
            <person name="Bye J."/>
            <person name="Carder C."/>
            <person name="Chapman J.C."/>
            <person name="Clark S.Y."/>
            <person name="Clarke G."/>
            <person name="Clee C."/>
            <person name="Cobley V."/>
            <person name="Collier R.E."/>
            <person name="Corby N."/>
            <person name="Coville G.J."/>
            <person name="Davies J."/>
            <person name="Deadman R."/>
            <person name="Dunn M."/>
            <person name="Earthrowl M."/>
            <person name="Ellington A.G."/>
            <person name="Errington H."/>
            <person name="Frankish A."/>
            <person name="Frankland J."/>
            <person name="French L."/>
            <person name="Garner P."/>
            <person name="Garnett J."/>
            <person name="Gay L."/>
            <person name="Ghori M.R.J."/>
            <person name="Gibson R."/>
            <person name="Gilby L.M."/>
            <person name="Gillett W."/>
            <person name="Glithero R.J."/>
            <person name="Grafham D.V."/>
            <person name="Griffiths C."/>
            <person name="Griffiths-Jones S."/>
            <person name="Grocock R."/>
            <person name="Hammond S."/>
            <person name="Harrison E.S.I."/>
            <person name="Hart E."/>
            <person name="Haugen E."/>
            <person name="Heath P.D."/>
            <person name="Holmes S."/>
            <person name="Holt K."/>
            <person name="Howden P.J."/>
            <person name="Hunt A.R."/>
            <person name="Hunt S.E."/>
            <person name="Hunter G."/>
            <person name="Isherwood J."/>
            <person name="James R."/>
            <person name="Johnson C."/>
            <person name="Johnson D."/>
            <person name="Joy A."/>
            <person name="Kay M."/>
            <person name="Kershaw J.K."/>
            <person name="Kibukawa M."/>
            <person name="Kimberley A.M."/>
            <person name="King A."/>
            <person name="Knights A.J."/>
            <person name="Lad H."/>
            <person name="Laird G."/>
            <person name="Lawlor S."/>
            <person name="Leongamornlert D.A."/>
            <person name="Lloyd D.M."/>
            <person name="Loveland J."/>
            <person name="Lovell J."/>
            <person name="Lush M.J."/>
            <person name="Lyne R."/>
            <person name="Martin S."/>
            <person name="Mashreghi-Mohammadi M."/>
            <person name="Matthews L."/>
            <person name="Matthews N.S.W."/>
            <person name="McLaren S."/>
            <person name="Milne S."/>
            <person name="Mistry S."/>
            <person name="Moore M.J.F."/>
            <person name="Nickerson T."/>
            <person name="O'Dell C.N."/>
            <person name="Oliver K."/>
            <person name="Palmeiri A."/>
            <person name="Palmer S.A."/>
            <person name="Parker A."/>
            <person name="Patel D."/>
            <person name="Pearce A.V."/>
            <person name="Peck A.I."/>
            <person name="Pelan S."/>
            <person name="Phelps K."/>
            <person name="Phillimore B.J."/>
            <person name="Plumb R."/>
            <person name="Rajan J."/>
            <person name="Raymond C."/>
            <person name="Rouse G."/>
            <person name="Saenphimmachak C."/>
            <person name="Sehra H.K."/>
            <person name="Sheridan E."/>
            <person name="Shownkeen R."/>
            <person name="Sims S."/>
            <person name="Skuce C.D."/>
            <person name="Smith M."/>
            <person name="Steward C."/>
            <person name="Subramanian S."/>
            <person name="Sycamore N."/>
            <person name="Tracey A."/>
            <person name="Tromans A."/>
            <person name="Van Helmond Z."/>
            <person name="Wall M."/>
            <person name="Wallis J.M."/>
            <person name="White S."/>
            <person name="Whitehead S.L."/>
            <person name="Wilkinson J.E."/>
            <person name="Willey D.L."/>
            <person name="Williams H."/>
            <person name="Wilming L."/>
            <person name="Wray P.W."/>
            <person name="Wu Z."/>
            <person name="Coulson A."/>
            <person name="Vaudin M."/>
            <person name="Sulston J.E."/>
            <person name="Durbin R.M."/>
            <person name="Hubbard T."/>
            <person name="Wooster R."/>
            <person name="Dunham I."/>
            <person name="Carter N.P."/>
            <person name="McVean G."/>
            <person name="Ross M.T."/>
            <person name="Harrow J."/>
            <person name="Olson M.V."/>
            <person name="Beck S."/>
            <person name="Rogers J."/>
            <person name="Bentley D.R."/>
        </authorList>
    </citation>
    <scope>NUCLEOTIDE SEQUENCE [LARGE SCALE GENOMIC DNA]</scope>
</reference>
<reference key="2">
    <citation type="journal article" date="2007" name="Genes Nutr.">
        <title>Dietary modulation and structure prediction of rat mucosal pentraxin (Mptx) protein and loss of function in humans.</title>
        <authorList>
            <person name="van der Meer-van Kraaij C."/>
            <person name="Siezen R."/>
            <person name="Kramer E."/>
            <person name="Reinders M."/>
            <person name="Blokzijl H."/>
            <person name="van der Meer R."/>
            <person name="Keijer J."/>
        </authorList>
    </citation>
    <scope>IDENTIFICATION AS POSSIBLE PSEUDOGENE</scope>
    <scope>TISSUE SPECIFICITY</scope>
</reference>
<dbReference type="EMBL" id="AL513323">
    <property type="status" value="NOT_ANNOTATED_CDS"/>
    <property type="molecule type" value="Genomic_DNA"/>
</dbReference>
<dbReference type="SMR" id="A8MV57"/>
<dbReference type="IntAct" id="A8MV57">
    <property type="interactions" value="1"/>
</dbReference>
<dbReference type="GlyGen" id="A8MV57">
    <property type="glycosylation" value="1 site"/>
</dbReference>
<dbReference type="BioMuta" id="HGNC:48364"/>
<dbReference type="AGR" id="HGNC:48364"/>
<dbReference type="GeneCards" id="MPTX1"/>
<dbReference type="HGNC" id="HGNC:48364">
    <property type="gene designation" value="MPTX1"/>
</dbReference>
<dbReference type="neXtProt" id="NX_A8MV57"/>
<dbReference type="InParanoid" id="A8MV57"/>
<dbReference type="PAN-GO" id="A8MV57">
    <property type="GO annotations" value="0 GO annotations based on evolutionary models"/>
</dbReference>
<dbReference type="PhylomeDB" id="A8MV57"/>
<dbReference type="PathwayCommons" id="A8MV57"/>
<dbReference type="SignaLink" id="A8MV57"/>
<dbReference type="Pharos" id="A8MV57">
    <property type="development level" value="Tdark"/>
</dbReference>
<dbReference type="Proteomes" id="UP000005640">
    <property type="component" value="Unplaced"/>
</dbReference>
<dbReference type="RNAct" id="A8MV57">
    <property type="molecule type" value="protein"/>
</dbReference>
<dbReference type="GO" id="GO:0046872">
    <property type="term" value="F:metal ion binding"/>
    <property type="evidence" value="ECO:0007669"/>
    <property type="project" value="UniProtKB-KW"/>
</dbReference>
<dbReference type="Gene3D" id="2.60.120.200">
    <property type="match status" value="1"/>
</dbReference>
<dbReference type="InterPro" id="IPR013320">
    <property type="entry name" value="ConA-like_dom_sf"/>
</dbReference>
<dbReference type="InterPro" id="IPR001759">
    <property type="entry name" value="Pentraxin-related"/>
</dbReference>
<dbReference type="InterPro" id="IPR051005">
    <property type="entry name" value="Pentraxin_domain"/>
</dbReference>
<dbReference type="PANTHER" id="PTHR45869">
    <property type="entry name" value="C-REACTIVE PROTEIN-RELATED"/>
    <property type="match status" value="1"/>
</dbReference>
<dbReference type="PANTHER" id="PTHR45869:SF6">
    <property type="entry name" value="MUCOSAL PENTRAXIN-RELATED"/>
    <property type="match status" value="1"/>
</dbReference>
<dbReference type="Pfam" id="PF00354">
    <property type="entry name" value="Pentaxin"/>
    <property type="match status" value="1"/>
</dbReference>
<dbReference type="PRINTS" id="PR00895">
    <property type="entry name" value="PENTAXIN"/>
</dbReference>
<dbReference type="SMART" id="SM00159">
    <property type="entry name" value="PTX"/>
    <property type="match status" value="1"/>
</dbReference>
<dbReference type="SUPFAM" id="SSF49899">
    <property type="entry name" value="Concanavalin A-like lectins/glucanases"/>
    <property type="match status" value="1"/>
</dbReference>
<dbReference type="PROSITE" id="PS51828">
    <property type="entry name" value="PTX_2"/>
    <property type="match status" value="1"/>
</dbReference>
<organism>
    <name type="scientific">Homo sapiens</name>
    <name type="common">Human</name>
    <dbReference type="NCBI Taxonomy" id="9606"/>
    <lineage>
        <taxon>Eukaryota</taxon>
        <taxon>Metazoa</taxon>
        <taxon>Chordata</taxon>
        <taxon>Craniata</taxon>
        <taxon>Vertebrata</taxon>
        <taxon>Euteleostomi</taxon>
        <taxon>Mammalia</taxon>
        <taxon>Eutheria</taxon>
        <taxon>Euarchontoglires</taxon>
        <taxon>Primates</taxon>
        <taxon>Haplorrhini</taxon>
        <taxon>Catarrhini</taxon>
        <taxon>Hominidae</taxon>
        <taxon>Homo</taxon>
    </lineage>
</organism>
<gene>
    <name type="primary">MPTX1</name>
    <name type="synonym">MPTX</name>
</gene>
<name>MPTX_HUMAN</name>
<protein>
    <recommendedName>
        <fullName>Putative mucosal pentraxin homolog</fullName>
    </recommendedName>
</protein>